<dbReference type="EMBL" id="AM774415">
    <property type="protein sequence ID" value="CAP14246.1"/>
    <property type="molecule type" value="Genomic_DNA"/>
</dbReference>
<dbReference type="SMR" id="B0R677"/>
<dbReference type="EnsemblBacteria" id="CAP14246">
    <property type="protein sequence ID" value="CAP14246"/>
    <property type="gene ID" value="OE_3416F"/>
</dbReference>
<dbReference type="KEGG" id="hsl:OE_3416F"/>
<dbReference type="HOGENOM" id="CLU_055156_6_0_2"/>
<dbReference type="PhylomeDB" id="B0R677"/>
<dbReference type="Proteomes" id="UP000001321">
    <property type="component" value="Chromosome"/>
</dbReference>
<dbReference type="GO" id="GO:0022625">
    <property type="term" value="C:cytosolic large ribosomal subunit"/>
    <property type="evidence" value="ECO:0007669"/>
    <property type="project" value="TreeGrafter"/>
</dbReference>
<dbReference type="GO" id="GO:0003723">
    <property type="term" value="F:RNA binding"/>
    <property type="evidence" value="ECO:0007669"/>
    <property type="project" value="TreeGrafter"/>
</dbReference>
<dbReference type="GO" id="GO:0003735">
    <property type="term" value="F:structural constituent of ribosome"/>
    <property type="evidence" value="ECO:0007669"/>
    <property type="project" value="InterPro"/>
</dbReference>
<dbReference type="GO" id="GO:0000463">
    <property type="term" value="P:maturation of LSU-rRNA from tricistronic rRNA transcript (SSU-rRNA, 5.8S rRNA, LSU-rRNA)"/>
    <property type="evidence" value="ECO:0007669"/>
    <property type="project" value="TreeGrafter"/>
</dbReference>
<dbReference type="GO" id="GO:0006412">
    <property type="term" value="P:translation"/>
    <property type="evidence" value="ECO:0007669"/>
    <property type="project" value="UniProtKB-UniRule"/>
</dbReference>
<dbReference type="CDD" id="cd01657">
    <property type="entry name" value="Ribosomal_L7_archeal_euk"/>
    <property type="match status" value="1"/>
</dbReference>
<dbReference type="Gene3D" id="1.10.15.30">
    <property type="match status" value="1"/>
</dbReference>
<dbReference type="Gene3D" id="3.30.1390.20">
    <property type="entry name" value="Ribosomal protein L30, ferredoxin-like fold domain"/>
    <property type="match status" value="1"/>
</dbReference>
<dbReference type="HAMAP" id="MF_01371_A">
    <property type="entry name" value="Ribosomal_uL30_A"/>
    <property type="match status" value="1"/>
</dbReference>
<dbReference type="InterPro" id="IPR036919">
    <property type="entry name" value="Ribo_uL30_ferredoxin-like_sf"/>
</dbReference>
<dbReference type="InterPro" id="IPR039699">
    <property type="entry name" value="Ribosomal_uL30"/>
</dbReference>
<dbReference type="InterPro" id="IPR005997">
    <property type="entry name" value="Ribosomal_uL30_arc"/>
</dbReference>
<dbReference type="InterPro" id="IPR035808">
    <property type="entry name" value="Ribosomal_uL30_euk_arc"/>
</dbReference>
<dbReference type="InterPro" id="IPR016082">
    <property type="entry name" value="Ribosomal_uL30_ferredoxin-like"/>
</dbReference>
<dbReference type="NCBIfam" id="NF004711">
    <property type="entry name" value="PRK06049.1"/>
    <property type="match status" value="1"/>
</dbReference>
<dbReference type="NCBIfam" id="TIGR01309">
    <property type="entry name" value="uL30_arch"/>
    <property type="match status" value="1"/>
</dbReference>
<dbReference type="PANTHER" id="PTHR11524">
    <property type="entry name" value="60S RIBOSOMAL PROTEIN L7"/>
    <property type="match status" value="1"/>
</dbReference>
<dbReference type="PANTHER" id="PTHR11524:SF16">
    <property type="entry name" value="LARGE RIBOSOMAL SUBUNIT PROTEIN UL30"/>
    <property type="match status" value="1"/>
</dbReference>
<dbReference type="Pfam" id="PF00327">
    <property type="entry name" value="Ribosomal_L30"/>
    <property type="match status" value="1"/>
</dbReference>
<dbReference type="SUPFAM" id="SSF55129">
    <property type="entry name" value="Ribosomal protein L30p/L7e"/>
    <property type="match status" value="1"/>
</dbReference>
<gene>
    <name evidence="1" type="primary">rpl30</name>
    <name type="ordered locus">OE_3416F</name>
</gene>
<accession>B0R677</accession>
<protein>
    <recommendedName>
        <fullName evidence="1">Large ribosomal subunit protein uL30</fullName>
    </recommendedName>
    <alternativeName>
        <fullName evidence="3">50S ribosomal protein L30</fullName>
    </alternativeName>
</protein>
<evidence type="ECO:0000255" key="1">
    <source>
        <dbReference type="HAMAP-Rule" id="MF_01371"/>
    </source>
</evidence>
<evidence type="ECO:0000256" key="2">
    <source>
        <dbReference type="SAM" id="MobiDB-lite"/>
    </source>
</evidence>
<evidence type="ECO:0000305" key="3"/>
<keyword id="KW-0687">Ribonucleoprotein</keyword>
<keyword id="KW-0689">Ribosomal protein</keyword>
<feature type="chain" id="PRO_0000347160" description="Large ribosomal subunit protein uL30">
    <location>
        <begin position="1"/>
        <end position="154"/>
    </location>
</feature>
<feature type="region of interest" description="Disordered" evidence="2">
    <location>
        <begin position="122"/>
        <end position="141"/>
    </location>
</feature>
<name>RL30_HALS3</name>
<sequence>MQALVQVRGPVDMSRDIQDTLEMLNIHSVNHCALVPETDTYSGMVAKVNDYVAFGEPSEAVLTDLIESRGEPASGAGDVDDAWVAEHTEYDDVADLAGALLAEETTLSDAGLAPVIRLHPPRGGHDGIKTPASDGGQLGKHTTEEIDHLLTDMR</sequence>
<proteinExistence type="inferred from homology"/>
<comment type="subunit">
    <text evidence="1">Part of the 50S ribosomal subunit.</text>
</comment>
<comment type="similarity">
    <text evidence="1">Belongs to the universal ribosomal protein uL30 family.</text>
</comment>
<reference key="1">
    <citation type="journal article" date="2008" name="Genomics">
        <title>Evolution in the laboratory: the genome of Halobacterium salinarum strain R1 compared to that of strain NRC-1.</title>
        <authorList>
            <person name="Pfeiffer F."/>
            <person name="Schuster S.C."/>
            <person name="Broicher A."/>
            <person name="Falb M."/>
            <person name="Palm P."/>
            <person name="Rodewald K."/>
            <person name="Ruepp A."/>
            <person name="Soppa J."/>
            <person name="Tittor J."/>
            <person name="Oesterhelt D."/>
        </authorList>
    </citation>
    <scope>NUCLEOTIDE SEQUENCE [LARGE SCALE GENOMIC DNA]</scope>
    <source>
        <strain>ATCC 29341 / DSM 671 / R1</strain>
    </source>
</reference>
<organism>
    <name type="scientific">Halobacterium salinarum (strain ATCC 29341 / DSM 671 / R1)</name>
    <dbReference type="NCBI Taxonomy" id="478009"/>
    <lineage>
        <taxon>Archaea</taxon>
        <taxon>Methanobacteriati</taxon>
        <taxon>Methanobacteriota</taxon>
        <taxon>Stenosarchaea group</taxon>
        <taxon>Halobacteria</taxon>
        <taxon>Halobacteriales</taxon>
        <taxon>Halobacteriaceae</taxon>
        <taxon>Halobacterium</taxon>
        <taxon>Halobacterium salinarum NRC-34001</taxon>
    </lineage>
</organism>